<name>LFTR_THIDA</name>
<gene>
    <name evidence="1" type="primary">aat</name>
    <name type="ordered locus">Tbd_2043</name>
</gene>
<protein>
    <recommendedName>
        <fullName evidence="1">Leucyl/phenylalanyl-tRNA--protein transferase</fullName>
        <ecNumber evidence="1">2.3.2.6</ecNumber>
    </recommendedName>
    <alternativeName>
        <fullName evidence="1">L/F-transferase</fullName>
    </alternativeName>
    <alternativeName>
        <fullName evidence="1">Leucyltransferase</fullName>
    </alternativeName>
    <alternativeName>
        <fullName evidence="1">Phenyalanyltransferase</fullName>
    </alternativeName>
</protein>
<sequence>MKEPFTNASYFPPVETALVDPNGLLAIGGDLSQERLLDAYRHGIFPWFNPREPIQWWSPDPRMVLPPAEIRVTRSLAKRLRNAGFELRVDSAFIEVMRACGAPREGAWGTWISAPMIAAYGRLFDAGYAHSIETWRDGRLVGGLYGVAIGRMFYGESMFSREPDASKVALVRLARQLERWGFGLIDCQMETPHLASMGARPIPRADFTARLAELVNLPHLPGPWTFDS</sequence>
<keyword id="KW-0012">Acyltransferase</keyword>
<keyword id="KW-0963">Cytoplasm</keyword>
<keyword id="KW-1185">Reference proteome</keyword>
<keyword id="KW-0808">Transferase</keyword>
<proteinExistence type="inferred from homology"/>
<comment type="function">
    <text evidence="1">Functions in the N-end rule pathway of protein degradation where it conjugates Leu, Phe and, less efficiently, Met from aminoacyl-tRNAs to the N-termini of proteins containing an N-terminal arginine or lysine.</text>
</comment>
<comment type="catalytic activity">
    <reaction evidence="1">
        <text>N-terminal L-lysyl-[protein] + L-leucyl-tRNA(Leu) = N-terminal L-leucyl-L-lysyl-[protein] + tRNA(Leu) + H(+)</text>
        <dbReference type="Rhea" id="RHEA:12340"/>
        <dbReference type="Rhea" id="RHEA-COMP:9613"/>
        <dbReference type="Rhea" id="RHEA-COMP:9622"/>
        <dbReference type="Rhea" id="RHEA-COMP:12670"/>
        <dbReference type="Rhea" id="RHEA-COMP:12671"/>
        <dbReference type="ChEBI" id="CHEBI:15378"/>
        <dbReference type="ChEBI" id="CHEBI:65249"/>
        <dbReference type="ChEBI" id="CHEBI:78442"/>
        <dbReference type="ChEBI" id="CHEBI:78494"/>
        <dbReference type="ChEBI" id="CHEBI:133043"/>
        <dbReference type="EC" id="2.3.2.6"/>
    </reaction>
</comment>
<comment type="catalytic activity">
    <reaction evidence="1">
        <text>N-terminal L-arginyl-[protein] + L-leucyl-tRNA(Leu) = N-terminal L-leucyl-L-arginyl-[protein] + tRNA(Leu) + H(+)</text>
        <dbReference type="Rhea" id="RHEA:50416"/>
        <dbReference type="Rhea" id="RHEA-COMP:9613"/>
        <dbReference type="Rhea" id="RHEA-COMP:9622"/>
        <dbReference type="Rhea" id="RHEA-COMP:12672"/>
        <dbReference type="Rhea" id="RHEA-COMP:12673"/>
        <dbReference type="ChEBI" id="CHEBI:15378"/>
        <dbReference type="ChEBI" id="CHEBI:64719"/>
        <dbReference type="ChEBI" id="CHEBI:78442"/>
        <dbReference type="ChEBI" id="CHEBI:78494"/>
        <dbReference type="ChEBI" id="CHEBI:133044"/>
        <dbReference type="EC" id="2.3.2.6"/>
    </reaction>
</comment>
<comment type="catalytic activity">
    <reaction evidence="1">
        <text>L-phenylalanyl-tRNA(Phe) + an N-terminal L-alpha-aminoacyl-[protein] = an N-terminal L-phenylalanyl-L-alpha-aminoacyl-[protein] + tRNA(Phe)</text>
        <dbReference type="Rhea" id="RHEA:43632"/>
        <dbReference type="Rhea" id="RHEA-COMP:9668"/>
        <dbReference type="Rhea" id="RHEA-COMP:9699"/>
        <dbReference type="Rhea" id="RHEA-COMP:10636"/>
        <dbReference type="Rhea" id="RHEA-COMP:10637"/>
        <dbReference type="ChEBI" id="CHEBI:78442"/>
        <dbReference type="ChEBI" id="CHEBI:78531"/>
        <dbReference type="ChEBI" id="CHEBI:78597"/>
        <dbReference type="ChEBI" id="CHEBI:83561"/>
        <dbReference type="EC" id="2.3.2.6"/>
    </reaction>
</comment>
<comment type="subcellular location">
    <subcellularLocation>
        <location evidence="1">Cytoplasm</location>
    </subcellularLocation>
</comment>
<comment type="similarity">
    <text evidence="1">Belongs to the L/F-transferase family.</text>
</comment>
<feature type="chain" id="PRO_0000258106" description="Leucyl/phenylalanyl-tRNA--protein transferase">
    <location>
        <begin position="1"/>
        <end position="228"/>
    </location>
</feature>
<reference key="1">
    <citation type="journal article" date="2006" name="J. Bacteriol.">
        <title>The genome sequence of the obligately chemolithoautotrophic, facultatively anaerobic bacterium Thiobacillus denitrificans.</title>
        <authorList>
            <person name="Beller H.R."/>
            <person name="Chain P.S."/>
            <person name="Letain T.E."/>
            <person name="Chakicherla A."/>
            <person name="Larimer F.W."/>
            <person name="Richardson P.M."/>
            <person name="Coleman M.A."/>
            <person name="Wood A.P."/>
            <person name="Kelly D.P."/>
        </authorList>
    </citation>
    <scope>NUCLEOTIDE SEQUENCE [LARGE SCALE GENOMIC DNA]</scope>
    <source>
        <strain>ATCC 25259 / T1</strain>
    </source>
</reference>
<accession>Q3SH93</accession>
<dbReference type="EC" id="2.3.2.6" evidence="1"/>
<dbReference type="EMBL" id="CP000116">
    <property type="protein sequence ID" value="AAZ97996.1"/>
    <property type="molecule type" value="Genomic_DNA"/>
</dbReference>
<dbReference type="RefSeq" id="WP_011312555.1">
    <property type="nucleotide sequence ID" value="NC_007404.1"/>
</dbReference>
<dbReference type="SMR" id="Q3SH93"/>
<dbReference type="STRING" id="292415.Tbd_2043"/>
<dbReference type="KEGG" id="tbd:Tbd_2043"/>
<dbReference type="eggNOG" id="COG2360">
    <property type="taxonomic scope" value="Bacteria"/>
</dbReference>
<dbReference type="HOGENOM" id="CLU_075045_0_0_4"/>
<dbReference type="OrthoDB" id="9790282at2"/>
<dbReference type="Proteomes" id="UP000008291">
    <property type="component" value="Chromosome"/>
</dbReference>
<dbReference type="GO" id="GO:0005737">
    <property type="term" value="C:cytoplasm"/>
    <property type="evidence" value="ECO:0007669"/>
    <property type="project" value="UniProtKB-SubCell"/>
</dbReference>
<dbReference type="GO" id="GO:0008914">
    <property type="term" value="F:leucyl-tRNA--protein transferase activity"/>
    <property type="evidence" value="ECO:0007669"/>
    <property type="project" value="UniProtKB-UniRule"/>
</dbReference>
<dbReference type="GO" id="GO:0030163">
    <property type="term" value="P:protein catabolic process"/>
    <property type="evidence" value="ECO:0007669"/>
    <property type="project" value="UniProtKB-UniRule"/>
</dbReference>
<dbReference type="FunFam" id="3.30.70.3550:FF:000001">
    <property type="entry name" value="Leucyl/phenylalanyl-tRNA--protein transferase"/>
    <property type="match status" value="1"/>
</dbReference>
<dbReference type="Gene3D" id="3.40.630.70">
    <property type="entry name" value="Leucyl/phenylalanyl-tRNA-protein transferase, C-terminal domain"/>
    <property type="match status" value="1"/>
</dbReference>
<dbReference type="Gene3D" id="3.30.70.3550">
    <property type="entry name" value="Leucyl/phenylalanyl-tRNA-protein transferase, N-terminal domain"/>
    <property type="match status" value="1"/>
</dbReference>
<dbReference type="HAMAP" id="MF_00688">
    <property type="entry name" value="Leu_Phe_trans"/>
    <property type="match status" value="1"/>
</dbReference>
<dbReference type="InterPro" id="IPR016181">
    <property type="entry name" value="Acyl_CoA_acyltransferase"/>
</dbReference>
<dbReference type="InterPro" id="IPR004616">
    <property type="entry name" value="Leu/Phe-tRNA_Trfase"/>
</dbReference>
<dbReference type="InterPro" id="IPR042203">
    <property type="entry name" value="Leu/Phe-tRNA_Trfase_C"/>
</dbReference>
<dbReference type="InterPro" id="IPR042221">
    <property type="entry name" value="Leu/Phe-tRNA_Trfase_N"/>
</dbReference>
<dbReference type="NCBIfam" id="TIGR00667">
    <property type="entry name" value="aat"/>
    <property type="match status" value="1"/>
</dbReference>
<dbReference type="PANTHER" id="PTHR30098">
    <property type="entry name" value="LEUCYL/PHENYLALANYL-TRNA--PROTEIN TRANSFERASE"/>
    <property type="match status" value="1"/>
</dbReference>
<dbReference type="PANTHER" id="PTHR30098:SF2">
    <property type="entry name" value="LEUCYL_PHENYLALANYL-TRNA--PROTEIN TRANSFERASE"/>
    <property type="match status" value="1"/>
</dbReference>
<dbReference type="Pfam" id="PF03588">
    <property type="entry name" value="Leu_Phe_trans"/>
    <property type="match status" value="1"/>
</dbReference>
<dbReference type="SUPFAM" id="SSF55729">
    <property type="entry name" value="Acyl-CoA N-acyltransferases (Nat)"/>
    <property type="match status" value="1"/>
</dbReference>
<evidence type="ECO:0000255" key="1">
    <source>
        <dbReference type="HAMAP-Rule" id="MF_00688"/>
    </source>
</evidence>
<organism>
    <name type="scientific">Thiobacillus denitrificans (strain ATCC 25259 / T1)</name>
    <dbReference type="NCBI Taxonomy" id="292415"/>
    <lineage>
        <taxon>Bacteria</taxon>
        <taxon>Pseudomonadati</taxon>
        <taxon>Pseudomonadota</taxon>
        <taxon>Betaproteobacteria</taxon>
        <taxon>Nitrosomonadales</taxon>
        <taxon>Thiobacillaceae</taxon>
        <taxon>Thiobacillus</taxon>
    </lineage>
</organism>